<evidence type="ECO:0000255" key="1">
    <source>
        <dbReference type="HAMAP-Rule" id="MF_01081"/>
    </source>
</evidence>
<organism>
    <name type="scientific">Methanococcus maripaludis (strain DSM 14266 / JCM 13030 / NBRC 101832 / S2 / LL)</name>
    <dbReference type="NCBI Taxonomy" id="267377"/>
    <lineage>
        <taxon>Archaea</taxon>
        <taxon>Methanobacteriati</taxon>
        <taxon>Methanobacteriota</taxon>
        <taxon>Methanomada group</taxon>
        <taxon>Methanococci</taxon>
        <taxon>Methanococcales</taxon>
        <taxon>Methanococcaceae</taxon>
        <taxon>Methanococcus</taxon>
    </lineage>
</organism>
<dbReference type="EC" id="5.4.99.25" evidence="1"/>
<dbReference type="EMBL" id="BX950229">
    <property type="protein sequence ID" value="CAF31242.1"/>
    <property type="molecule type" value="Genomic_DNA"/>
</dbReference>
<dbReference type="RefSeq" id="WP_011171630.1">
    <property type="nucleotide sequence ID" value="NC_005791.1"/>
</dbReference>
<dbReference type="SMR" id="Q6LWM3"/>
<dbReference type="STRING" id="267377.MMP1686"/>
<dbReference type="EnsemblBacteria" id="CAF31242">
    <property type="protein sequence ID" value="CAF31242"/>
    <property type="gene ID" value="MMP1686"/>
</dbReference>
<dbReference type="KEGG" id="mmp:MMP1686"/>
<dbReference type="PATRIC" id="fig|267377.15.peg.1726"/>
<dbReference type="eggNOG" id="arCOG00987">
    <property type="taxonomic scope" value="Archaea"/>
</dbReference>
<dbReference type="HOGENOM" id="CLU_032087_3_0_2"/>
<dbReference type="OrthoDB" id="35866at2157"/>
<dbReference type="Proteomes" id="UP000000590">
    <property type="component" value="Chromosome"/>
</dbReference>
<dbReference type="GO" id="GO:0003723">
    <property type="term" value="F:RNA binding"/>
    <property type="evidence" value="ECO:0007669"/>
    <property type="project" value="InterPro"/>
</dbReference>
<dbReference type="GO" id="GO:0160148">
    <property type="term" value="F:tRNA pseudouridine(55) synthase activity"/>
    <property type="evidence" value="ECO:0007669"/>
    <property type="project" value="UniProtKB-EC"/>
</dbReference>
<dbReference type="GO" id="GO:0000495">
    <property type="term" value="P:box H/ACA sno(s)RNA 3'-end processing"/>
    <property type="evidence" value="ECO:0007669"/>
    <property type="project" value="TreeGrafter"/>
</dbReference>
<dbReference type="GO" id="GO:1990481">
    <property type="term" value="P:mRNA pseudouridine synthesis"/>
    <property type="evidence" value="ECO:0007669"/>
    <property type="project" value="TreeGrafter"/>
</dbReference>
<dbReference type="GO" id="GO:0031118">
    <property type="term" value="P:rRNA pseudouridine synthesis"/>
    <property type="evidence" value="ECO:0007669"/>
    <property type="project" value="TreeGrafter"/>
</dbReference>
<dbReference type="GO" id="GO:0031120">
    <property type="term" value="P:snRNA pseudouridine synthesis"/>
    <property type="evidence" value="ECO:0007669"/>
    <property type="project" value="TreeGrafter"/>
</dbReference>
<dbReference type="GO" id="GO:0031119">
    <property type="term" value="P:tRNA pseudouridine synthesis"/>
    <property type="evidence" value="ECO:0007669"/>
    <property type="project" value="UniProtKB-UniRule"/>
</dbReference>
<dbReference type="CDD" id="cd02572">
    <property type="entry name" value="PseudoU_synth_hDyskerin"/>
    <property type="match status" value="1"/>
</dbReference>
<dbReference type="CDD" id="cd21148">
    <property type="entry name" value="PUA_Cbf5"/>
    <property type="match status" value="1"/>
</dbReference>
<dbReference type="FunFam" id="3.30.2350.10:FF:000001">
    <property type="entry name" value="H/ACA ribonucleoprotein complex subunit CBF5"/>
    <property type="match status" value="1"/>
</dbReference>
<dbReference type="Gene3D" id="3.30.2350.10">
    <property type="entry name" value="Pseudouridine synthase"/>
    <property type="match status" value="1"/>
</dbReference>
<dbReference type="Gene3D" id="2.30.130.10">
    <property type="entry name" value="PUA domain"/>
    <property type="match status" value="1"/>
</dbReference>
<dbReference type="HAMAP" id="MF_01081">
    <property type="entry name" value="TruB_arch"/>
    <property type="match status" value="1"/>
</dbReference>
<dbReference type="InterPro" id="IPR012960">
    <property type="entry name" value="Dyskerin-like"/>
</dbReference>
<dbReference type="InterPro" id="IPR020103">
    <property type="entry name" value="PsdUridine_synth_cat_dom_sf"/>
</dbReference>
<dbReference type="InterPro" id="IPR002501">
    <property type="entry name" value="PsdUridine_synth_N"/>
</dbReference>
<dbReference type="InterPro" id="IPR002478">
    <property type="entry name" value="PUA"/>
</dbReference>
<dbReference type="InterPro" id="IPR015947">
    <property type="entry name" value="PUA-like_sf"/>
</dbReference>
<dbReference type="InterPro" id="IPR036974">
    <property type="entry name" value="PUA_sf"/>
</dbReference>
<dbReference type="InterPro" id="IPR004802">
    <property type="entry name" value="tRNA_PsdUridine_synth_B_fam"/>
</dbReference>
<dbReference type="InterPro" id="IPR026326">
    <property type="entry name" value="TruB_arch"/>
</dbReference>
<dbReference type="InterPro" id="IPR032819">
    <property type="entry name" value="TruB_C"/>
</dbReference>
<dbReference type="InterPro" id="IPR004521">
    <property type="entry name" value="Uncharacterised_CHP00451"/>
</dbReference>
<dbReference type="NCBIfam" id="TIGR00425">
    <property type="entry name" value="CBF5"/>
    <property type="match status" value="1"/>
</dbReference>
<dbReference type="NCBIfam" id="NF003280">
    <property type="entry name" value="PRK04270.1"/>
    <property type="match status" value="1"/>
</dbReference>
<dbReference type="NCBIfam" id="TIGR00451">
    <property type="entry name" value="unchar_dom_2"/>
    <property type="match status" value="1"/>
</dbReference>
<dbReference type="PANTHER" id="PTHR23127">
    <property type="entry name" value="CENTROMERE/MICROTUBULE BINDING PROTEIN CBF5"/>
    <property type="match status" value="1"/>
</dbReference>
<dbReference type="PANTHER" id="PTHR23127:SF0">
    <property type="entry name" value="H_ACA RIBONUCLEOPROTEIN COMPLEX SUBUNIT DKC1"/>
    <property type="match status" value="1"/>
</dbReference>
<dbReference type="Pfam" id="PF08068">
    <property type="entry name" value="DKCLD"/>
    <property type="match status" value="1"/>
</dbReference>
<dbReference type="Pfam" id="PF01472">
    <property type="entry name" value="PUA"/>
    <property type="match status" value="1"/>
</dbReference>
<dbReference type="Pfam" id="PF16198">
    <property type="entry name" value="TruB_C_2"/>
    <property type="match status" value="1"/>
</dbReference>
<dbReference type="Pfam" id="PF01509">
    <property type="entry name" value="TruB_N"/>
    <property type="match status" value="1"/>
</dbReference>
<dbReference type="SMART" id="SM01136">
    <property type="entry name" value="DKCLD"/>
    <property type="match status" value="1"/>
</dbReference>
<dbReference type="SMART" id="SM00359">
    <property type="entry name" value="PUA"/>
    <property type="match status" value="1"/>
</dbReference>
<dbReference type="SUPFAM" id="SSF55120">
    <property type="entry name" value="Pseudouridine synthase"/>
    <property type="match status" value="1"/>
</dbReference>
<dbReference type="SUPFAM" id="SSF88697">
    <property type="entry name" value="PUA domain-like"/>
    <property type="match status" value="1"/>
</dbReference>
<dbReference type="PROSITE" id="PS50890">
    <property type="entry name" value="PUA"/>
    <property type="match status" value="1"/>
</dbReference>
<sequence>MELIVKEESKTDYNYGSDPYNRDIKTLLNTGLVVIDKPSGPTSHEVAAWVRNMLNLVKAGHGGTLDPKVTGALPVALGNTTKCVPIWHIPPKEYVCLMHLHDDAELVDIENIFKEFTGRIHQRPPLKAAVKRSLRIRKIYEIEILEIDGRDILFRTKCQSGTYLRKLVDDMGEALGTSAHMQELRRTISGPFYENEAVYLQDLLDAYIFWKEDGNEEELRKIVKPLEYGLQHLKKIIIKDSAVDAVCHGATLYSSGISKIEKGLGTDEVVLIETLKGEAVAVGKPLMNTKDMLKTEEGEVVEITRVIMEPGIYPRIWKKRNKNDKSKPELKKK</sequence>
<comment type="function">
    <text evidence="1">Could be responsible for synthesis of pseudouridine from uracil-55 in the psi GC loop of transfer RNAs.</text>
</comment>
<comment type="catalytic activity">
    <reaction evidence="1">
        <text>uridine(55) in tRNA = pseudouridine(55) in tRNA</text>
        <dbReference type="Rhea" id="RHEA:42532"/>
        <dbReference type="Rhea" id="RHEA-COMP:10101"/>
        <dbReference type="Rhea" id="RHEA-COMP:10102"/>
        <dbReference type="ChEBI" id="CHEBI:65314"/>
        <dbReference type="ChEBI" id="CHEBI:65315"/>
        <dbReference type="EC" id="5.4.99.25"/>
    </reaction>
</comment>
<comment type="similarity">
    <text evidence="1">Belongs to the pseudouridine synthase TruB family. Type 2 subfamily.</text>
</comment>
<accession>Q6LWM3</accession>
<gene>
    <name evidence="1" type="primary">truB</name>
    <name type="ordered locus">MMP1686</name>
</gene>
<feature type="chain" id="PRO_0000121962" description="Probable tRNA pseudouridine synthase B">
    <location>
        <begin position="1"/>
        <end position="333"/>
    </location>
</feature>
<feature type="domain" description="PUA" evidence="1">
    <location>
        <begin position="233"/>
        <end position="308"/>
    </location>
</feature>
<feature type="active site" description="Nucleophile" evidence="1">
    <location>
        <position position="66"/>
    </location>
</feature>
<name>TRUB_METMP</name>
<reference key="1">
    <citation type="journal article" date="2004" name="J. Bacteriol.">
        <title>Complete genome sequence of the genetically tractable hydrogenotrophic methanogen Methanococcus maripaludis.</title>
        <authorList>
            <person name="Hendrickson E.L."/>
            <person name="Kaul R."/>
            <person name="Zhou Y."/>
            <person name="Bovee D."/>
            <person name="Chapman P."/>
            <person name="Chung J."/>
            <person name="Conway de Macario E."/>
            <person name="Dodsworth J.A."/>
            <person name="Gillett W."/>
            <person name="Graham D.E."/>
            <person name="Hackett M."/>
            <person name="Haydock A.K."/>
            <person name="Kang A."/>
            <person name="Land M.L."/>
            <person name="Levy R."/>
            <person name="Lie T.J."/>
            <person name="Major T.A."/>
            <person name="Moore B.C."/>
            <person name="Porat I."/>
            <person name="Palmeiri A."/>
            <person name="Rouse G."/>
            <person name="Saenphimmachak C."/>
            <person name="Soell D."/>
            <person name="Van Dien S."/>
            <person name="Wang T."/>
            <person name="Whitman W.B."/>
            <person name="Xia Q."/>
            <person name="Zhang Y."/>
            <person name="Larimer F.W."/>
            <person name="Olson M.V."/>
            <person name="Leigh J.A."/>
        </authorList>
    </citation>
    <scope>NUCLEOTIDE SEQUENCE [LARGE SCALE GENOMIC DNA]</scope>
    <source>
        <strain>DSM 14266 / JCM 13030 / NBRC 101832 / S2 / LL</strain>
    </source>
</reference>
<proteinExistence type="inferred from homology"/>
<keyword id="KW-0413">Isomerase</keyword>
<keyword id="KW-1185">Reference proteome</keyword>
<keyword id="KW-0819">tRNA processing</keyword>
<protein>
    <recommendedName>
        <fullName evidence="1">Probable tRNA pseudouridine synthase B</fullName>
        <ecNumber evidence="1">5.4.99.25</ecNumber>
    </recommendedName>
    <alternativeName>
        <fullName evidence="1">tRNA pseudouridine(55) synthase</fullName>
        <shortName evidence="1">Psi55 synthase</shortName>
    </alternativeName>
    <alternativeName>
        <fullName evidence="1">tRNA pseudouridylate synthase</fullName>
    </alternativeName>
    <alternativeName>
        <fullName evidence="1">tRNA-uridine isomerase</fullName>
    </alternativeName>
</protein>